<reference key="1">
    <citation type="journal article" date="1992" name="Mol. Biochem. Parasitol.">
        <title>Molecular cloning and expression of the gene encoding the kinetoplast-associated type II DNA topoisomerase of Crithidia fasciculata.</title>
        <authorList>
            <person name="Pasion S.G."/>
            <person name="Hines J.C."/>
            <person name="Aebersold R."/>
            <person name="Ray D.S."/>
        </authorList>
    </citation>
    <scope>NUCLEOTIDE SEQUENCE [GENOMIC DNA]</scope>
    <source>
        <strain>CFC1</strain>
    </source>
</reference>
<evidence type="ECO:0000250" key="1"/>
<evidence type="ECO:0000250" key="2">
    <source>
        <dbReference type="UniProtKB" id="P11388"/>
    </source>
</evidence>
<evidence type="ECO:0000255" key="3">
    <source>
        <dbReference type="PROSITE-ProRule" id="PRU00995"/>
    </source>
</evidence>
<evidence type="ECO:0000255" key="4">
    <source>
        <dbReference type="PROSITE-ProRule" id="PRU01384"/>
    </source>
</evidence>
<evidence type="ECO:0000256" key="5">
    <source>
        <dbReference type="SAM" id="MobiDB-lite"/>
    </source>
</evidence>
<evidence type="ECO:0000305" key="6"/>
<feature type="chain" id="PRO_0000145375" description="DNA topoisomerase 2">
    <location>
        <begin position="1"/>
        <end position="1239"/>
    </location>
</feature>
<feature type="domain" description="Toprim" evidence="3">
    <location>
        <begin position="434"/>
        <end position="548"/>
    </location>
</feature>
<feature type="domain" description="Topo IIA-type catalytic" evidence="4">
    <location>
        <begin position="685"/>
        <end position="1101"/>
    </location>
</feature>
<feature type="region of interest" description="Interaction with DNA" evidence="2">
    <location>
        <begin position="956"/>
        <end position="965"/>
    </location>
</feature>
<feature type="region of interest" description="Disordered" evidence="5">
    <location>
        <begin position="1167"/>
        <end position="1206"/>
    </location>
</feature>
<feature type="active site" description="O-(5'-phospho-DNA)-tyrosine intermediate" evidence="4">
    <location>
        <position position="775"/>
    </location>
</feature>
<feature type="binding site" evidence="2">
    <location>
        <position position="65"/>
    </location>
    <ligand>
        <name>ATP</name>
        <dbReference type="ChEBI" id="CHEBI:30616"/>
    </ligand>
</feature>
<feature type="binding site" evidence="2">
    <location>
        <position position="96"/>
    </location>
    <ligand>
        <name>ATP</name>
        <dbReference type="ChEBI" id="CHEBI:30616"/>
    </ligand>
</feature>
<feature type="binding site" evidence="2">
    <location>
        <begin position="124"/>
        <end position="126"/>
    </location>
    <ligand>
        <name>ATP</name>
        <dbReference type="ChEBI" id="CHEBI:30616"/>
    </ligand>
</feature>
<feature type="binding site" evidence="2">
    <location>
        <begin position="137"/>
        <end position="144"/>
    </location>
    <ligand>
        <name>ATP</name>
        <dbReference type="ChEBI" id="CHEBI:30616"/>
    </ligand>
</feature>
<feature type="binding site" evidence="2">
    <location>
        <begin position="354"/>
        <end position="356"/>
    </location>
    <ligand>
        <name>ATP</name>
        <dbReference type="ChEBI" id="CHEBI:30616"/>
    </ligand>
</feature>
<feature type="binding site" evidence="3">
    <location>
        <position position="440"/>
    </location>
    <ligand>
        <name>Mg(2+)</name>
        <dbReference type="ChEBI" id="CHEBI:18420"/>
        <label>1</label>
        <note>catalytic</note>
    </ligand>
</feature>
<feature type="binding site" evidence="3">
    <location>
        <position position="517"/>
    </location>
    <ligand>
        <name>Mg(2+)</name>
        <dbReference type="ChEBI" id="CHEBI:18420"/>
        <label>1</label>
        <note>catalytic</note>
    </ligand>
</feature>
<feature type="binding site" evidence="3">
    <location>
        <position position="517"/>
    </location>
    <ligand>
        <name>Mg(2+)</name>
        <dbReference type="ChEBI" id="CHEBI:18420"/>
        <label>2</label>
    </ligand>
</feature>
<feature type="binding site" evidence="3">
    <location>
        <position position="519"/>
    </location>
    <ligand>
        <name>Mg(2+)</name>
        <dbReference type="ChEBI" id="CHEBI:18420"/>
        <label>2</label>
    </ligand>
</feature>
<feature type="site" description="Interaction with DNA" evidence="3">
    <location>
        <position position="468"/>
    </location>
</feature>
<feature type="site" description="Interaction with DNA" evidence="3">
    <location>
        <position position="471"/>
    </location>
</feature>
<feature type="site" description="Interaction with DNA" evidence="3">
    <location>
        <position position="640"/>
    </location>
</feature>
<feature type="site" description="Interaction with DNA" evidence="3">
    <location>
        <position position="641"/>
    </location>
</feature>
<feature type="site" description="Interaction with DNA" evidence="3">
    <location>
        <position position="693"/>
    </location>
</feature>
<feature type="site" description="Interaction with DNA" evidence="3">
    <location>
        <position position="733"/>
    </location>
</feature>
<feature type="site" description="Transition state stabilizer" evidence="1">
    <location>
        <position position="774"/>
    </location>
</feature>
<feature type="site" description="Important for DNA bending; intercalates between base pairs of target DNA" evidence="1">
    <location>
        <position position="826"/>
    </location>
</feature>
<sequence>MTDASKYQKLTPIDHVLLRPEMYVGSIETQSIPMFVFDPAKGKMVWESMQVNQGLLKIVDEILLNAADNINNSVRGARMTYISIKISDSGEIMVENDGAGLPIVKSKEHKMYIPEMVFGHLLTSSNYNNDASSTTAGRHGYGAKLTNILSTKFSVVCRTAGREFHMSWTDHMRMATTPRVSNVDPKEKNVTRVTFMPDYAHFGFPTAAISLDMKRVLHKRIMDLAAMFSKIEVRLNNVPFGFQTFNDYARLYSLPGADGAMPPEPFVHTGPNGSIAFVPQLTQSPKRIVGVVNGVVTYNGGTHCTSAMEILETGLDSLSRSLKKDGKVIDTNRVARHFTVLVFLIQSQPKFDSQSKARLVSTVTMPRVPRTALDQYLAAMPFLEAHMNSMDDQLAAELNKEIGTGKRLSSRSLISSITKLVDATSSRSDGKNIRTLIVTEGDSAKALALNSLSSEQKKFCGVFPLRGKLLNVRNKNLKRLKTCKELQDLFLALGLELGKTYKSPAELRYQRLLVMTDQDADGSHIKGLVINAFESLWPSLLQHNPGYISLFSTPIVKIKVNGKAKEVVAFHSFRDFHRWQRANPNARYSAKYYKGLGTSTTAEGKEYFADMERNVMRLVVEPKDHRLLDSVFDSAEVEWRKEWMSKANAFQGEVDIDRSKKLLTIGDFVHKEMVHFALVGNARAIPHCVDGLKPSQRKILWAMLKRHSSEAAKVAQLSGYISEVSSFHHGEASLQETIVKMAQNFTGGNNINLLVPEGQFGSRQQLGNDHAAPRYIFTKLSRFARLLFPEDDDPLLDYIDEEGTMVEPNHYVPILPLLLCNGAVGIGFGFATNIPSFHPLDVSAAVRAMINGESAKQVVRNLVPWAVGFQGTVRRGPEKEYIAVGKYTAHRNGRLHVSELPWMTSIEAFRSHISSLASSDVVQRIADYSGANHIDIDLIVREGSMTTWAECETDLALSQRIYINGTVFSPDGTLSPIDADLSPVLQWHYDRRLDLYKRRRTRQIGLLEMDLARLQSTRKFVEHFRQGHIDFLAATDDTLTKTCVKLGLVRVDDGYDYILKKPITFYTKTSTEKLQADIKKTQDSIAVLKQTTPVKMWLTDLDKFDKTFQEYERVLIHSIQKEQRPASITGGEEVPALRQPPLMLEAPAKGAASSSYRVHICRYEEPPASKRKPEDTYGGALSSGGSTRNVGKRLTGARGAKKKKVVRRTRTKMSLGTRVAEFAGAQLGRLLPQLPRLLF</sequence>
<dbReference type="EC" id="5.6.2.2" evidence="3"/>
<dbReference type="EMBL" id="X59623">
    <property type="protein sequence ID" value="CAA42182.1"/>
    <property type="molecule type" value="Genomic_DNA"/>
</dbReference>
<dbReference type="PIR" id="A45648">
    <property type="entry name" value="A45648"/>
</dbReference>
<dbReference type="SMR" id="P27570"/>
<dbReference type="VEuPathDB" id="TriTrypDB:CFAC1_240045600"/>
<dbReference type="GO" id="GO:0020023">
    <property type="term" value="C:kinetoplast"/>
    <property type="evidence" value="ECO:0007669"/>
    <property type="project" value="UniProtKB-SubCell"/>
</dbReference>
<dbReference type="GO" id="GO:0005634">
    <property type="term" value="C:nucleus"/>
    <property type="evidence" value="ECO:0007669"/>
    <property type="project" value="UniProtKB-SubCell"/>
</dbReference>
<dbReference type="GO" id="GO:0005524">
    <property type="term" value="F:ATP binding"/>
    <property type="evidence" value="ECO:0007669"/>
    <property type="project" value="UniProtKB-KW"/>
</dbReference>
<dbReference type="GO" id="GO:0003677">
    <property type="term" value="F:DNA binding"/>
    <property type="evidence" value="ECO:0007669"/>
    <property type="project" value="UniProtKB-KW"/>
</dbReference>
<dbReference type="GO" id="GO:0003918">
    <property type="term" value="F:DNA topoisomerase type II (double strand cut, ATP-hydrolyzing) activity"/>
    <property type="evidence" value="ECO:0007669"/>
    <property type="project" value="UniProtKB-EC"/>
</dbReference>
<dbReference type="GO" id="GO:0046872">
    <property type="term" value="F:metal ion binding"/>
    <property type="evidence" value="ECO:0007669"/>
    <property type="project" value="UniProtKB-KW"/>
</dbReference>
<dbReference type="GO" id="GO:0006265">
    <property type="term" value="P:DNA topological change"/>
    <property type="evidence" value="ECO:0007669"/>
    <property type="project" value="InterPro"/>
</dbReference>
<dbReference type="GO" id="GO:0000712">
    <property type="term" value="P:resolution of meiotic recombination intermediates"/>
    <property type="evidence" value="ECO:0007669"/>
    <property type="project" value="TreeGrafter"/>
</dbReference>
<dbReference type="GO" id="GO:0000819">
    <property type="term" value="P:sister chromatid segregation"/>
    <property type="evidence" value="ECO:0007669"/>
    <property type="project" value="TreeGrafter"/>
</dbReference>
<dbReference type="CDD" id="cd00187">
    <property type="entry name" value="TOP4c"/>
    <property type="match status" value="1"/>
</dbReference>
<dbReference type="FunFam" id="3.30.565.10:FF:000092">
    <property type="entry name" value="DNA topoisomerase 2"/>
    <property type="match status" value="1"/>
</dbReference>
<dbReference type="FunFam" id="3.40.50.670:FF:000001">
    <property type="entry name" value="DNA topoisomerase 2"/>
    <property type="match status" value="1"/>
</dbReference>
<dbReference type="FunFam" id="3.90.199.10:FF:000002">
    <property type="entry name" value="DNA topoisomerase 2"/>
    <property type="match status" value="1"/>
</dbReference>
<dbReference type="Gene3D" id="3.30.1360.40">
    <property type="match status" value="1"/>
</dbReference>
<dbReference type="Gene3D" id="3.30.1490.30">
    <property type="match status" value="1"/>
</dbReference>
<dbReference type="Gene3D" id="3.30.230.10">
    <property type="match status" value="1"/>
</dbReference>
<dbReference type="Gene3D" id="3.40.50.670">
    <property type="match status" value="1"/>
</dbReference>
<dbReference type="Gene3D" id="3.30.565.10">
    <property type="entry name" value="Histidine kinase-like ATPase, C-terminal domain"/>
    <property type="match status" value="1"/>
</dbReference>
<dbReference type="Gene3D" id="3.90.199.10">
    <property type="entry name" value="Topoisomerase II, domain 5"/>
    <property type="match status" value="1"/>
</dbReference>
<dbReference type="Gene3D" id="1.10.268.10">
    <property type="entry name" value="Topoisomerase, domain 3"/>
    <property type="match status" value="1"/>
</dbReference>
<dbReference type="InterPro" id="IPR050634">
    <property type="entry name" value="DNA_Topoisomerase_II"/>
</dbReference>
<dbReference type="InterPro" id="IPR036890">
    <property type="entry name" value="HATPase_C_sf"/>
</dbReference>
<dbReference type="InterPro" id="IPR020568">
    <property type="entry name" value="Ribosomal_Su5_D2-typ_SF"/>
</dbReference>
<dbReference type="InterPro" id="IPR014721">
    <property type="entry name" value="Ribsml_uS5_D2-typ_fold_subgr"/>
</dbReference>
<dbReference type="InterPro" id="IPR001241">
    <property type="entry name" value="Topo_IIA"/>
</dbReference>
<dbReference type="InterPro" id="IPR013760">
    <property type="entry name" value="Topo_IIA-like_dom_sf"/>
</dbReference>
<dbReference type="InterPro" id="IPR013758">
    <property type="entry name" value="Topo_IIA_A/C_ab"/>
</dbReference>
<dbReference type="InterPro" id="IPR013757">
    <property type="entry name" value="Topo_IIA_A_a_sf"/>
</dbReference>
<dbReference type="InterPro" id="IPR013759">
    <property type="entry name" value="Topo_IIA_B_C"/>
</dbReference>
<dbReference type="InterPro" id="IPR013506">
    <property type="entry name" value="Topo_IIA_bsu_dom2"/>
</dbReference>
<dbReference type="InterPro" id="IPR002205">
    <property type="entry name" value="Topo_IIA_dom_A"/>
</dbReference>
<dbReference type="InterPro" id="IPR001154">
    <property type="entry name" value="TopoII_euk"/>
</dbReference>
<dbReference type="InterPro" id="IPR018522">
    <property type="entry name" value="TopoIIA_CS"/>
</dbReference>
<dbReference type="InterPro" id="IPR031660">
    <property type="entry name" value="TOPRIM_C"/>
</dbReference>
<dbReference type="InterPro" id="IPR006171">
    <property type="entry name" value="TOPRIM_dom"/>
</dbReference>
<dbReference type="PANTHER" id="PTHR10169:SF50">
    <property type="entry name" value="DNA TOPOISOMERASE 2"/>
    <property type="match status" value="1"/>
</dbReference>
<dbReference type="PANTHER" id="PTHR10169">
    <property type="entry name" value="DNA TOPOISOMERASE/GYRASE"/>
    <property type="match status" value="1"/>
</dbReference>
<dbReference type="Pfam" id="PF00204">
    <property type="entry name" value="DNA_gyraseB"/>
    <property type="match status" value="1"/>
</dbReference>
<dbReference type="Pfam" id="PF00521">
    <property type="entry name" value="DNA_topoisoIV"/>
    <property type="match status" value="1"/>
</dbReference>
<dbReference type="Pfam" id="PF01751">
    <property type="entry name" value="Toprim"/>
    <property type="match status" value="1"/>
</dbReference>
<dbReference type="Pfam" id="PF16898">
    <property type="entry name" value="TOPRIM_C"/>
    <property type="match status" value="1"/>
</dbReference>
<dbReference type="PRINTS" id="PR01158">
    <property type="entry name" value="TOPISMRASEII"/>
</dbReference>
<dbReference type="PRINTS" id="PR00418">
    <property type="entry name" value="TPI2FAMILY"/>
</dbReference>
<dbReference type="SMART" id="SM00433">
    <property type="entry name" value="TOP2c"/>
    <property type="match status" value="1"/>
</dbReference>
<dbReference type="SMART" id="SM00434">
    <property type="entry name" value="TOP4c"/>
    <property type="match status" value="1"/>
</dbReference>
<dbReference type="SUPFAM" id="SSF55874">
    <property type="entry name" value="ATPase domain of HSP90 chaperone/DNA topoisomerase II/histidine kinase"/>
    <property type="match status" value="1"/>
</dbReference>
<dbReference type="SUPFAM" id="SSF54211">
    <property type="entry name" value="Ribosomal protein S5 domain 2-like"/>
    <property type="match status" value="1"/>
</dbReference>
<dbReference type="SUPFAM" id="SSF56719">
    <property type="entry name" value="Type II DNA topoisomerase"/>
    <property type="match status" value="1"/>
</dbReference>
<dbReference type="PROSITE" id="PS52040">
    <property type="entry name" value="TOPO_IIA"/>
    <property type="match status" value="1"/>
</dbReference>
<dbReference type="PROSITE" id="PS00177">
    <property type="entry name" value="TOPOISOMERASE_II"/>
    <property type="match status" value="1"/>
</dbReference>
<dbReference type="PROSITE" id="PS50880">
    <property type="entry name" value="TOPRIM"/>
    <property type="match status" value="1"/>
</dbReference>
<organism>
    <name type="scientific">Crithidia fasciculata</name>
    <dbReference type="NCBI Taxonomy" id="5656"/>
    <lineage>
        <taxon>Eukaryota</taxon>
        <taxon>Discoba</taxon>
        <taxon>Euglenozoa</taxon>
        <taxon>Kinetoplastea</taxon>
        <taxon>Metakinetoplastina</taxon>
        <taxon>Trypanosomatida</taxon>
        <taxon>Trypanosomatidae</taxon>
        <taxon>Leishmaniinae</taxon>
        <taxon>Crithidia</taxon>
    </lineage>
</organism>
<keyword id="KW-0067">ATP-binding</keyword>
<keyword id="KW-0238">DNA-binding</keyword>
<keyword id="KW-0413">Isomerase</keyword>
<keyword id="KW-0419">Kinetoplast</keyword>
<keyword id="KW-0460">Magnesium</keyword>
<keyword id="KW-0479">Metal-binding</keyword>
<keyword id="KW-0496">Mitochondrion</keyword>
<keyword id="KW-0547">Nucleotide-binding</keyword>
<keyword id="KW-0539">Nucleus</keyword>
<keyword id="KW-0799">Topoisomerase</keyword>
<protein>
    <recommendedName>
        <fullName>DNA topoisomerase 2</fullName>
        <ecNumber evidence="3">5.6.2.2</ecNumber>
    </recommendedName>
    <alternativeName>
        <fullName>DNA topoisomerase II</fullName>
    </alternativeName>
</protein>
<proteinExistence type="inferred from homology"/>
<accession>P27570</accession>
<gene>
    <name type="primary">TOP2</name>
</gene>
<name>TOP2_CRIFA</name>
<comment type="function">
    <text>Control of topological states of DNA by transient breakage and subsequent rejoining of DNA strands. Topoisomerase II makes double-strand breaks.</text>
</comment>
<comment type="catalytic activity">
    <reaction evidence="3">
        <text>ATP-dependent breakage, passage and rejoining of double-stranded DNA.</text>
        <dbReference type="EC" id="5.6.2.2"/>
    </reaction>
</comment>
<comment type="cofactor">
    <cofactor evidence="3">
        <name>Mg(2+)</name>
        <dbReference type="ChEBI" id="CHEBI:18420"/>
    </cofactor>
    <cofactor evidence="3">
        <name>Mn(2+)</name>
        <dbReference type="ChEBI" id="CHEBI:29035"/>
    </cofactor>
    <cofactor evidence="3">
        <name>Ca(2+)</name>
        <dbReference type="ChEBI" id="CHEBI:29108"/>
    </cofactor>
    <text evidence="3">Binds two Mg(2+) per subunit. The magnesium ions form salt bridges with both the protein and the DNA. Can also accept other divalent metal cations, such as Mn(2+) or Ca(2+).</text>
</comment>
<comment type="subunit">
    <text>Homodimer.</text>
</comment>
<comment type="subcellular location">
    <subcellularLocation>
        <location>Nucleus</location>
    </subcellularLocation>
    <subcellularLocation>
        <location>Mitochondrion matrix</location>
        <location>Kinetoplast</location>
    </subcellularLocation>
</comment>
<comment type="miscellaneous">
    <text>Eukaryotic topoisomerase I and II can relax both negative and positive supercoils, whereas prokaryotic enzymes relax only negative supercoils.</text>
</comment>
<comment type="similarity">
    <text evidence="6">Belongs to the type II topoisomerase family.</text>
</comment>